<name>CYSH_RHOOB</name>
<gene>
    <name evidence="1" type="primary">cysH</name>
    <name type="ordered locus">ROP_09720</name>
</gene>
<proteinExistence type="inferred from homology"/>
<comment type="function">
    <text evidence="1">Catalyzes the formation of sulfite from adenosine 5'-phosphosulfate (APS) using thioredoxin as an electron donor.</text>
</comment>
<comment type="catalytic activity">
    <reaction evidence="1">
        <text>[thioredoxin]-disulfide + sulfite + AMP + 2 H(+) = adenosine 5'-phosphosulfate + [thioredoxin]-dithiol</text>
        <dbReference type="Rhea" id="RHEA:21976"/>
        <dbReference type="Rhea" id="RHEA-COMP:10698"/>
        <dbReference type="Rhea" id="RHEA-COMP:10700"/>
        <dbReference type="ChEBI" id="CHEBI:15378"/>
        <dbReference type="ChEBI" id="CHEBI:17359"/>
        <dbReference type="ChEBI" id="CHEBI:29950"/>
        <dbReference type="ChEBI" id="CHEBI:50058"/>
        <dbReference type="ChEBI" id="CHEBI:58243"/>
        <dbReference type="ChEBI" id="CHEBI:456215"/>
        <dbReference type="EC" id="1.8.4.10"/>
    </reaction>
</comment>
<comment type="cofactor">
    <cofactor evidence="1">
        <name>[4Fe-4S] cluster</name>
        <dbReference type="ChEBI" id="CHEBI:49883"/>
    </cofactor>
    <text evidence="1">Binds 1 [4Fe-4S] cluster per subunit.</text>
</comment>
<comment type="pathway">
    <text evidence="1">Sulfur metabolism; hydrogen sulfide biosynthesis; sulfite from sulfate.</text>
</comment>
<comment type="subcellular location">
    <subcellularLocation>
        <location evidence="1">Cytoplasm</location>
    </subcellularLocation>
</comment>
<comment type="similarity">
    <text evidence="1">Belongs to the PAPS reductase family. CysH subfamily.</text>
</comment>
<feature type="chain" id="PRO_1000117931" description="Adenosine 5'-phosphosulfate reductase">
    <location>
        <begin position="1"/>
        <end position="247"/>
    </location>
</feature>
<feature type="region of interest" description="Disordered" evidence="2">
    <location>
        <begin position="222"/>
        <end position="247"/>
    </location>
</feature>
<feature type="active site" description="Nucleophile; cysteine thiosulfonate intermediate" evidence="1">
    <location>
        <position position="242"/>
    </location>
</feature>
<feature type="binding site" evidence="1">
    <location>
        <position position="133"/>
    </location>
    <ligand>
        <name>[4Fe-4S] cluster</name>
        <dbReference type="ChEBI" id="CHEBI:49883"/>
    </ligand>
</feature>
<feature type="binding site" evidence="1">
    <location>
        <position position="134"/>
    </location>
    <ligand>
        <name>[4Fe-4S] cluster</name>
        <dbReference type="ChEBI" id="CHEBI:49883"/>
    </ligand>
</feature>
<feature type="binding site" evidence="1">
    <location>
        <position position="216"/>
    </location>
    <ligand>
        <name>[4Fe-4S] cluster</name>
        <dbReference type="ChEBI" id="CHEBI:49883"/>
    </ligand>
</feature>
<feature type="binding site" evidence="1">
    <location>
        <position position="219"/>
    </location>
    <ligand>
        <name>[4Fe-4S] cluster</name>
        <dbReference type="ChEBI" id="CHEBI:49883"/>
    </ligand>
</feature>
<sequence length="247" mass="26281">MSVDLSSATEGDLRELAARGAASLEGASARELLQWTEETFGSGASEGTGYRNSFIVASNMQDGVLVHLAAQVHPGVDVLFLDTGYHFAETIGTRDAVEQVYGVNVINARAEASVAEQDAAEGKDLFAREPNRCCALRKVAPLKKTLAGYKAWVTGIRRVEAPTRANAPLISFDDAFGLVKINPIAAWSDEDMQSYIDEHSILVNPLVDEGYPSIGCAPCTSKPAPGSDPRSGRWAGQAKTECGLHAS</sequence>
<organism>
    <name type="scientific">Rhodococcus opacus (strain B4)</name>
    <dbReference type="NCBI Taxonomy" id="632772"/>
    <lineage>
        <taxon>Bacteria</taxon>
        <taxon>Bacillati</taxon>
        <taxon>Actinomycetota</taxon>
        <taxon>Actinomycetes</taxon>
        <taxon>Mycobacteriales</taxon>
        <taxon>Nocardiaceae</taxon>
        <taxon>Rhodococcus</taxon>
    </lineage>
</organism>
<reference key="1">
    <citation type="submission" date="2009-03" db="EMBL/GenBank/DDBJ databases">
        <title>Comparison of the complete genome sequences of Rhodococcus erythropolis PR4 and Rhodococcus opacus B4.</title>
        <authorList>
            <person name="Takarada H."/>
            <person name="Sekine M."/>
            <person name="Hosoyama A."/>
            <person name="Yamada R."/>
            <person name="Fujisawa T."/>
            <person name="Omata S."/>
            <person name="Shimizu A."/>
            <person name="Tsukatani N."/>
            <person name="Tanikawa S."/>
            <person name="Fujita N."/>
            <person name="Harayama S."/>
        </authorList>
    </citation>
    <scope>NUCLEOTIDE SEQUENCE [LARGE SCALE GENOMIC DNA]</scope>
    <source>
        <strain>B4</strain>
    </source>
</reference>
<evidence type="ECO:0000255" key="1">
    <source>
        <dbReference type="HAMAP-Rule" id="MF_00063"/>
    </source>
</evidence>
<evidence type="ECO:0000256" key="2">
    <source>
        <dbReference type="SAM" id="MobiDB-lite"/>
    </source>
</evidence>
<dbReference type="EC" id="1.8.4.10" evidence="1"/>
<dbReference type="EMBL" id="AP011115">
    <property type="protein sequence ID" value="BAH49219.1"/>
    <property type="molecule type" value="Genomic_DNA"/>
</dbReference>
<dbReference type="RefSeq" id="WP_012688206.1">
    <property type="nucleotide sequence ID" value="NC_012522.1"/>
</dbReference>
<dbReference type="SMR" id="C1AUL1"/>
<dbReference type="STRING" id="632772.ROP_09720"/>
<dbReference type="KEGG" id="rop:ROP_09720"/>
<dbReference type="PATRIC" id="fig|632772.20.peg.1038"/>
<dbReference type="HOGENOM" id="CLU_044089_2_0_11"/>
<dbReference type="OrthoDB" id="9794018at2"/>
<dbReference type="Proteomes" id="UP000002212">
    <property type="component" value="Chromosome"/>
</dbReference>
<dbReference type="GO" id="GO:0005737">
    <property type="term" value="C:cytoplasm"/>
    <property type="evidence" value="ECO:0007669"/>
    <property type="project" value="UniProtKB-SubCell"/>
</dbReference>
<dbReference type="GO" id="GO:0051539">
    <property type="term" value="F:4 iron, 4 sulfur cluster binding"/>
    <property type="evidence" value="ECO:0007669"/>
    <property type="project" value="UniProtKB-UniRule"/>
</dbReference>
<dbReference type="GO" id="GO:0043866">
    <property type="term" value="F:adenylyl-sulfate reductase (thioredoxin) activity"/>
    <property type="evidence" value="ECO:0007669"/>
    <property type="project" value="UniProtKB-EC"/>
</dbReference>
<dbReference type="GO" id="GO:0046872">
    <property type="term" value="F:metal ion binding"/>
    <property type="evidence" value="ECO:0007669"/>
    <property type="project" value="UniProtKB-KW"/>
</dbReference>
<dbReference type="GO" id="GO:0004604">
    <property type="term" value="F:phosphoadenylyl-sulfate reductase (thioredoxin) activity"/>
    <property type="evidence" value="ECO:0007669"/>
    <property type="project" value="UniProtKB-UniRule"/>
</dbReference>
<dbReference type="GO" id="GO:0019344">
    <property type="term" value="P:cysteine biosynthetic process"/>
    <property type="evidence" value="ECO:0007669"/>
    <property type="project" value="InterPro"/>
</dbReference>
<dbReference type="GO" id="GO:0070814">
    <property type="term" value="P:hydrogen sulfide biosynthetic process"/>
    <property type="evidence" value="ECO:0007669"/>
    <property type="project" value="UniProtKB-UniRule"/>
</dbReference>
<dbReference type="GO" id="GO:0019379">
    <property type="term" value="P:sulfate assimilation, phosphoadenylyl sulfate reduction by phosphoadenylyl-sulfate reductase (thioredoxin)"/>
    <property type="evidence" value="ECO:0007669"/>
    <property type="project" value="UniProtKB-UniRule"/>
</dbReference>
<dbReference type="CDD" id="cd23945">
    <property type="entry name" value="PAPS_reductase"/>
    <property type="match status" value="1"/>
</dbReference>
<dbReference type="Gene3D" id="3.40.50.620">
    <property type="entry name" value="HUPs"/>
    <property type="match status" value="1"/>
</dbReference>
<dbReference type="HAMAP" id="MF_00063">
    <property type="entry name" value="CysH"/>
    <property type="match status" value="1"/>
</dbReference>
<dbReference type="InterPro" id="IPR011798">
    <property type="entry name" value="APS_reductase"/>
</dbReference>
<dbReference type="InterPro" id="IPR004511">
    <property type="entry name" value="PAPS/APS_Rdtase"/>
</dbReference>
<dbReference type="InterPro" id="IPR002500">
    <property type="entry name" value="PAPS_reduct_dom"/>
</dbReference>
<dbReference type="InterPro" id="IPR014729">
    <property type="entry name" value="Rossmann-like_a/b/a_fold"/>
</dbReference>
<dbReference type="NCBIfam" id="TIGR02055">
    <property type="entry name" value="APS_reductase"/>
    <property type="match status" value="1"/>
</dbReference>
<dbReference type="NCBIfam" id="TIGR00434">
    <property type="entry name" value="cysH"/>
    <property type="match status" value="1"/>
</dbReference>
<dbReference type="NCBIfam" id="NF002537">
    <property type="entry name" value="PRK02090.1"/>
    <property type="match status" value="1"/>
</dbReference>
<dbReference type="PANTHER" id="PTHR46509">
    <property type="entry name" value="PHOSPHOADENOSINE PHOSPHOSULFATE REDUCTASE"/>
    <property type="match status" value="1"/>
</dbReference>
<dbReference type="PANTHER" id="PTHR46509:SF1">
    <property type="entry name" value="PHOSPHOADENOSINE PHOSPHOSULFATE REDUCTASE"/>
    <property type="match status" value="1"/>
</dbReference>
<dbReference type="Pfam" id="PF01507">
    <property type="entry name" value="PAPS_reduct"/>
    <property type="match status" value="1"/>
</dbReference>
<dbReference type="PIRSF" id="PIRSF000857">
    <property type="entry name" value="PAPS_reductase"/>
    <property type="match status" value="1"/>
</dbReference>
<dbReference type="SUPFAM" id="SSF52402">
    <property type="entry name" value="Adenine nucleotide alpha hydrolases-like"/>
    <property type="match status" value="1"/>
</dbReference>
<keyword id="KW-0963">Cytoplasm</keyword>
<keyword id="KW-0408">Iron</keyword>
<keyword id="KW-0411">Iron-sulfur</keyword>
<keyword id="KW-0479">Metal-binding</keyword>
<keyword id="KW-0560">Oxidoreductase</keyword>
<protein>
    <recommendedName>
        <fullName evidence="1">Adenosine 5'-phosphosulfate reductase</fullName>
        <shortName evidence="1">APS reductase</shortName>
        <ecNumber evidence="1">1.8.4.10</ecNumber>
    </recommendedName>
    <alternativeName>
        <fullName evidence="1">5'-adenylylsulfate reductase</fullName>
    </alternativeName>
    <alternativeName>
        <fullName evidence="1">Thioredoxin-dependent 5'-adenylylsulfate reductase</fullName>
    </alternativeName>
</protein>
<accession>C1AUL1</accession>